<reference key="1">
    <citation type="submission" date="2008-02" db="EMBL/GenBank/DDBJ databases">
        <title>Complete sequence of Synechococcus sp. PCC 7002.</title>
        <authorList>
            <person name="Li T."/>
            <person name="Zhao J."/>
            <person name="Zhao C."/>
            <person name="Liu Z."/>
            <person name="Zhao F."/>
            <person name="Marquardt J."/>
            <person name="Nomura C.T."/>
            <person name="Persson S."/>
            <person name="Detter J.C."/>
            <person name="Richardson P.M."/>
            <person name="Lanz C."/>
            <person name="Schuster S.C."/>
            <person name="Wang J."/>
            <person name="Li S."/>
            <person name="Huang X."/>
            <person name="Cai T."/>
            <person name="Yu Z."/>
            <person name="Luo J."/>
            <person name="Zhao J."/>
            <person name="Bryant D.A."/>
        </authorList>
    </citation>
    <scope>NUCLEOTIDE SEQUENCE [LARGE SCALE GENOMIC DNA]</scope>
    <source>
        <strain>ATCC 27264 / PCC 7002 / PR-6</strain>
    </source>
</reference>
<proteinExistence type="inferred from homology"/>
<keyword id="KW-1185">Reference proteome</keyword>
<keyword id="KW-0687">Ribonucleoprotein</keyword>
<keyword id="KW-0689">Ribosomal protein</keyword>
<keyword id="KW-0694">RNA-binding</keyword>
<keyword id="KW-0699">rRNA-binding</keyword>
<organism>
    <name type="scientific">Picosynechococcus sp. (strain ATCC 27264 / PCC 7002 / PR-6)</name>
    <name type="common">Agmenellum quadruplicatum</name>
    <dbReference type="NCBI Taxonomy" id="32049"/>
    <lineage>
        <taxon>Bacteria</taxon>
        <taxon>Bacillati</taxon>
        <taxon>Cyanobacteriota</taxon>
        <taxon>Cyanophyceae</taxon>
        <taxon>Oscillatoriophycideae</taxon>
        <taxon>Chroococcales</taxon>
        <taxon>Geminocystaceae</taxon>
        <taxon>Picosynechococcus</taxon>
    </lineage>
</organism>
<evidence type="ECO:0000255" key="1">
    <source>
        <dbReference type="HAMAP-Rule" id="MF_01341"/>
    </source>
</evidence>
<evidence type="ECO:0000256" key="2">
    <source>
        <dbReference type="SAM" id="MobiDB-lite"/>
    </source>
</evidence>
<evidence type="ECO:0000305" key="3"/>
<name>RL15_PICP2</name>
<comment type="function">
    <text evidence="1">Binds to the 23S rRNA.</text>
</comment>
<comment type="subunit">
    <text evidence="1">Part of the 50S ribosomal subunit.</text>
</comment>
<comment type="similarity">
    <text evidence="1">Belongs to the universal ribosomal protein uL15 family.</text>
</comment>
<accession>B1XJJ0</accession>
<protein>
    <recommendedName>
        <fullName evidence="1">Large ribosomal subunit protein uL15</fullName>
    </recommendedName>
    <alternativeName>
        <fullName evidence="3">50S ribosomal protein L15</fullName>
    </alternativeName>
</protein>
<feature type="chain" id="PRO_1000142890" description="Large ribosomal subunit protein uL15">
    <location>
        <begin position="1"/>
        <end position="146"/>
    </location>
</feature>
<feature type="region of interest" description="Disordered" evidence="2">
    <location>
        <begin position="1"/>
        <end position="52"/>
    </location>
</feature>
<feature type="compositionally biased region" description="Basic residues" evidence="2">
    <location>
        <begin position="11"/>
        <end position="20"/>
    </location>
</feature>
<feature type="compositionally biased region" description="Gly residues" evidence="2">
    <location>
        <begin position="23"/>
        <end position="35"/>
    </location>
</feature>
<gene>
    <name evidence="1" type="primary">rplO</name>
    <name type="ordered locus">SYNPCC7002_A1048</name>
</gene>
<dbReference type="EMBL" id="CP000951">
    <property type="protein sequence ID" value="ACA99050.1"/>
    <property type="molecule type" value="Genomic_DNA"/>
</dbReference>
<dbReference type="RefSeq" id="WP_012306673.1">
    <property type="nucleotide sequence ID" value="NZ_JAHHPU010000001.1"/>
</dbReference>
<dbReference type="SMR" id="B1XJJ0"/>
<dbReference type="STRING" id="32049.SYNPCC7002_A1048"/>
<dbReference type="KEGG" id="syp:SYNPCC7002_A1048"/>
<dbReference type="eggNOG" id="COG0200">
    <property type="taxonomic scope" value="Bacteria"/>
</dbReference>
<dbReference type="HOGENOM" id="CLU_055188_4_2_3"/>
<dbReference type="Proteomes" id="UP000001688">
    <property type="component" value="Chromosome"/>
</dbReference>
<dbReference type="GO" id="GO:0022625">
    <property type="term" value="C:cytosolic large ribosomal subunit"/>
    <property type="evidence" value="ECO:0007669"/>
    <property type="project" value="TreeGrafter"/>
</dbReference>
<dbReference type="GO" id="GO:0019843">
    <property type="term" value="F:rRNA binding"/>
    <property type="evidence" value="ECO:0007669"/>
    <property type="project" value="UniProtKB-UniRule"/>
</dbReference>
<dbReference type="GO" id="GO:0003735">
    <property type="term" value="F:structural constituent of ribosome"/>
    <property type="evidence" value="ECO:0007669"/>
    <property type="project" value="InterPro"/>
</dbReference>
<dbReference type="GO" id="GO:0006412">
    <property type="term" value="P:translation"/>
    <property type="evidence" value="ECO:0007669"/>
    <property type="project" value="UniProtKB-UniRule"/>
</dbReference>
<dbReference type="Gene3D" id="3.100.10.10">
    <property type="match status" value="1"/>
</dbReference>
<dbReference type="HAMAP" id="MF_01341">
    <property type="entry name" value="Ribosomal_uL15"/>
    <property type="match status" value="1"/>
</dbReference>
<dbReference type="InterPro" id="IPR030878">
    <property type="entry name" value="Ribosomal_uL15"/>
</dbReference>
<dbReference type="InterPro" id="IPR021131">
    <property type="entry name" value="Ribosomal_uL15/eL18"/>
</dbReference>
<dbReference type="InterPro" id="IPR036227">
    <property type="entry name" value="Ribosomal_uL15/eL18_sf"/>
</dbReference>
<dbReference type="InterPro" id="IPR005749">
    <property type="entry name" value="Ribosomal_uL15_bac-type"/>
</dbReference>
<dbReference type="InterPro" id="IPR001196">
    <property type="entry name" value="Ribosomal_uL15_CS"/>
</dbReference>
<dbReference type="NCBIfam" id="TIGR01071">
    <property type="entry name" value="rplO_bact"/>
    <property type="match status" value="1"/>
</dbReference>
<dbReference type="PANTHER" id="PTHR12934">
    <property type="entry name" value="50S RIBOSOMAL PROTEIN L15"/>
    <property type="match status" value="1"/>
</dbReference>
<dbReference type="PANTHER" id="PTHR12934:SF11">
    <property type="entry name" value="LARGE RIBOSOMAL SUBUNIT PROTEIN UL15M"/>
    <property type="match status" value="1"/>
</dbReference>
<dbReference type="Pfam" id="PF00828">
    <property type="entry name" value="Ribosomal_L27A"/>
    <property type="match status" value="1"/>
</dbReference>
<dbReference type="SUPFAM" id="SSF52080">
    <property type="entry name" value="Ribosomal proteins L15p and L18e"/>
    <property type="match status" value="1"/>
</dbReference>
<dbReference type="PROSITE" id="PS00475">
    <property type="entry name" value="RIBOSOMAL_L15"/>
    <property type="match status" value="1"/>
</dbReference>
<sequence>MKLSNLSPKAGSKKRRRRVGRGIAAGQGASCGFGMRGQKSRSGTGTKAGFEGGQMPLYRRVPKLKHFTIVNPKNFTIVNVGQLTDLPANTEVTLESLMAAGIVTTNDGPLKVLGDGELSVALKVTAAAFSNGAKAKIEAAGGSCEA</sequence>